<feature type="chain" id="PRO_1000065535" description="Iron-sulfur cluster repair protein ScdA">
    <location>
        <begin position="1"/>
        <end position="224"/>
    </location>
</feature>
<accession>Q2FK11</accession>
<comment type="function">
    <text evidence="1">Di-iron-containing protein involved in the repair of iron-sulfur clusters damaged by oxidative and nitrosative stress conditions.</text>
</comment>
<comment type="subunit">
    <text evidence="1">Homodimer.</text>
</comment>
<comment type="subcellular location">
    <subcellularLocation>
        <location evidence="1">Cytoplasm</location>
    </subcellularLocation>
</comment>
<comment type="similarity">
    <text evidence="1">Belongs to the RIC family. ScdA subfamily.</text>
</comment>
<protein>
    <recommendedName>
        <fullName evidence="1">Iron-sulfur cluster repair protein ScdA</fullName>
    </recommendedName>
</protein>
<dbReference type="EMBL" id="CP000255">
    <property type="protein sequence ID" value="ABD21118.1"/>
    <property type="molecule type" value="Genomic_DNA"/>
</dbReference>
<dbReference type="RefSeq" id="WP_000608826.1">
    <property type="nucleotide sequence ID" value="NZ_CP027476.1"/>
</dbReference>
<dbReference type="SMR" id="Q2FK11"/>
<dbReference type="KEGG" id="saa:SAUSA300_0253"/>
<dbReference type="HOGENOM" id="CLU_076075_0_1_9"/>
<dbReference type="OMA" id="ACTTWRV"/>
<dbReference type="Proteomes" id="UP000001939">
    <property type="component" value="Chromosome"/>
</dbReference>
<dbReference type="GO" id="GO:0005737">
    <property type="term" value="C:cytoplasm"/>
    <property type="evidence" value="ECO:0007669"/>
    <property type="project" value="UniProtKB-SubCell"/>
</dbReference>
<dbReference type="GO" id="GO:0046872">
    <property type="term" value="F:metal ion binding"/>
    <property type="evidence" value="ECO:0007669"/>
    <property type="project" value="UniProtKB-KW"/>
</dbReference>
<dbReference type="GO" id="GO:0030091">
    <property type="term" value="P:protein repair"/>
    <property type="evidence" value="ECO:0007669"/>
    <property type="project" value="UniProtKB-UniRule"/>
</dbReference>
<dbReference type="GO" id="GO:0051409">
    <property type="term" value="P:response to nitrosative stress"/>
    <property type="evidence" value="ECO:0007669"/>
    <property type="project" value="UniProtKB-UniRule"/>
</dbReference>
<dbReference type="GO" id="GO:0006979">
    <property type="term" value="P:response to oxidative stress"/>
    <property type="evidence" value="ECO:0007669"/>
    <property type="project" value="UniProtKB-UniRule"/>
</dbReference>
<dbReference type="FunFam" id="1.20.120.520:FF:000003">
    <property type="entry name" value="Iron-sulfur cluster repair protein ScdA"/>
    <property type="match status" value="1"/>
</dbReference>
<dbReference type="Gene3D" id="1.20.120.520">
    <property type="entry name" value="nmb1532 protein domain like"/>
    <property type="match status" value="1"/>
</dbReference>
<dbReference type="Gene3D" id="1.10.3910.10">
    <property type="entry name" value="SP0561-like"/>
    <property type="match status" value="1"/>
</dbReference>
<dbReference type="HAMAP" id="MF_01156">
    <property type="entry name" value="RIC_ScdA"/>
    <property type="match status" value="1"/>
</dbReference>
<dbReference type="InterPro" id="IPR012312">
    <property type="entry name" value="Hemerythrin-like"/>
</dbReference>
<dbReference type="InterPro" id="IPR019903">
    <property type="entry name" value="RIC_family"/>
</dbReference>
<dbReference type="InterPro" id="IPR023551">
    <property type="entry name" value="ScdA"/>
</dbReference>
<dbReference type="InterPro" id="IPR038062">
    <property type="entry name" value="ScdA-like_N_sf"/>
</dbReference>
<dbReference type="NCBIfam" id="TIGR03652">
    <property type="entry name" value="FeS_repair_RIC"/>
    <property type="match status" value="1"/>
</dbReference>
<dbReference type="NCBIfam" id="NF009777">
    <property type="entry name" value="PRK13276.1"/>
    <property type="match status" value="1"/>
</dbReference>
<dbReference type="PANTHER" id="PTHR36438">
    <property type="entry name" value="IRON-SULFUR CLUSTER REPAIR PROTEIN YTFE"/>
    <property type="match status" value="1"/>
</dbReference>
<dbReference type="PANTHER" id="PTHR36438:SF1">
    <property type="entry name" value="IRON-SULFUR CLUSTER REPAIR PROTEIN YTFE"/>
    <property type="match status" value="1"/>
</dbReference>
<dbReference type="Pfam" id="PF01814">
    <property type="entry name" value="Hemerythrin"/>
    <property type="match status" value="1"/>
</dbReference>
<dbReference type="Pfam" id="PF04405">
    <property type="entry name" value="ScdA_N"/>
    <property type="match status" value="1"/>
</dbReference>
<dbReference type="SUPFAM" id="SSF140683">
    <property type="entry name" value="SP0561-like"/>
    <property type="match status" value="1"/>
</dbReference>
<sequence>MINKNDIVADVVTDYPKAADIFRSVGIDFCCGGQVSIEAAALEKKNVDLNELLQRLNDVEQTNTPGSLNPKFLNVSSLIQYIQSAYHEPLREEFKNLTPYVTKLSKVHGPNHPYLVELKETYDTFKNGMLEHMQKEDDVDFPKLIKYEQGEVVDDINTVIDDLVSDHIATGELLVKMSELTSSYEPPIEACGTWRLVYQRLKALEVLTHEHVHLENHVLFKKVS</sequence>
<reference key="1">
    <citation type="journal article" date="2006" name="Lancet">
        <title>Complete genome sequence of USA300, an epidemic clone of community-acquired meticillin-resistant Staphylococcus aureus.</title>
        <authorList>
            <person name="Diep B.A."/>
            <person name="Gill S.R."/>
            <person name="Chang R.F."/>
            <person name="Phan T.H."/>
            <person name="Chen J.H."/>
            <person name="Davidson M.G."/>
            <person name="Lin F."/>
            <person name="Lin J."/>
            <person name="Carleton H.A."/>
            <person name="Mongodin E.F."/>
            <person name="Sensabaugh G.F."/>
            <person name="Perdreau-Remington F."/>
        </authorList>
    </citation>
    <scope>NUCLEOTIDE SEQUENCE [LARGE SCALE GENOMIC DNA]</scope>
    <source>
        <strain>USA300</strain>
    </source>
</reference>
<name>SCDA_STAA3</name>
<gene>
    <name evidence="1" type="primary">scdA</name>
    <name type="ordered locus">SAUSA300_0253</name>
</gene>
<evidence type="ECO:0000255" key="1">
    <source>
        <dbReference type="HAMAP-Rule" id="MF_01156"/>
    </source>
</evidence>
<organism>
    <name type="scientific">Staphylococcus aureus (strain USA300)</name>
    <dbReference type="NCBI Taxonomy" id="367830"/>
    <lineage>
        <taxon>Bacteria</taxon>
        <taxon>Bacillati</taxon>
        <taxon>Bacillota</taxon>
        <taxon>Bacilli</taxon>
        <taxon>Bacillales</taxon>
        <taxon>Staphylococcaceae</taxon>
        <taxon>Staphylococcus</taxon>
    </lineage>
</organism>
<keyword id="KW-0963">Cytoplasm</keyword>
<keyword id="KW-0408">Iron</keyword>
<keyword id="KW-0479">Metal-binding</keyword>
<keyword id="KW-0346">Stress response</keyword>
<proteinExistence type="inferred from homology"/>